<name>FKB2A_RHIO9</name>
<accession>P0C1J4</accession>
<accession>I1C0M4</accession>
<organism>
    <name type="scientific">Rhizopus delemar (strain RA 99-880 / ATCC MYA-4621 / FGSC 9543 / NRRL 43880)</name>
    <name type="common">Mucormycosis agent</name>
    <name type="synonym">Rhizopus arrhizus var. delemar</name>
    <dbReference type="NCBI Taxonomy" id="246409"/>
    <lineage>
        <taxon>Eukaryota</taxon>
        <taxon>Fungi</taxon>
        <taxon>Fungi incertae sedis</taxon>
        <taxon>Mucoromycota</taxon>
        <taxon>Mucoromycotina</taxon>
        <taxon>Mucoromycetes</taxon>
        <taxon>Mucorales</taxon>
        <taxon>Mucorineae</taxon>
        <taxon>Rhizopodaceae</taxon>
        <taxon>Rhizopus</taxon>
    </lineage>
</organism>
<evidence type="ECO:0000250" key="1"/>
<evidence type="ECO:0000255" key="2"/>
<evidence type="ECO:0000255" key="3">
    <source>
        <dbReference type="PROSITE-ProRule" id="PRU00277"/>
    </source>
</evidence>
<evidence type="ECO:0000305" key="4"/>
<feature type="signal peptide" evidence="2">
    <location>
        <begin position="1"/>
        <end position="21"/>
    </location>
</feature>
<feature type="chain" id="PRO_0000244727" description="FK506-binding protein 2A">
    <location>
        <begin position="22"/>
        <end position="167"/>
    </location>
</feature>
<feature type="transmembrane region" description="Helical" evidence="2">
    <location>
        <begin position="132"/>
        <end position="152"/>
    </location>
</feature>
<feature type="domain" description="PPIase FKBP-type" evidence="3">
    <location>
        <begin position="41"/>
        <end position="130"/>
    </location>
</feature>
<dbReference type="EC" id="5.2.1.8"/>
<dbReference type="EMBL" id="CH476735">
    <property type="protein sequence ID" value="EIE82004.1"/>
    <property type="molecule type" value="Genomic_DNA"/>
</dbReference>
<dbReference type="SMR" id="P0C1J4"/>
<dbReference type="STRING" id="246409.P0C1J4"/>
<dbReference type="VEuPathDB" id="FungiDB:RO3G_06709"/>
<dbReference type="eggNOG" id="KOG0549">
    <property type="taxonomic scope" value="Eukaryota"/>
</dbReference>
<dbReference type="InParanoid" id="P0C1J4"/>
<dbReference type="OMA" id="PKTCDIQ"/>
<dbReference type="OrthoDB" id="6529at4827"/>
<dbReference type="Proteomes" id="UP000009138">
    <property type="component" value="Unassembled WGS sequence"/>
</dbReference>
<dbReference type="GO" id="GO:0005783">
    <property type="term" value="C:endoplasmic reticulum"/>
    <property type="evidence" value="ECO:0007669"/>
    <property type="project" value="TreeGrafter"/>
</dbReference>
<dbReference type="GO" id="GO:0016020">
    <property type="term" value="C:membrane"/>
    <property type="evidence" value="ECO:0007669"/>
    <property type="project" value="UniProtKB-SubCell"/>
</dbReference>
<dbReference type="GO" id="GO:0003755">
    <property type="term" value="F:peptidyl-prolyl cis-trans isomerase activity"/>
    <property type="evidence" value="ECO:0007669"/>
    <property type="project" value="UniProtKB-KW"/>
</dbReference>
<dbReference type="GO" id="GO:0061077">
    <property type="term" value="P:chaperone-mediated protein folding"/>
    <property type="evidence" value="ECO:0007669"/>
    <property type="project" value="InterPro"/>
</dbReference>
<dbReference type="Gene3D" id="3.10.50.40">
    <property type="match status" value="1"/>
</dbReference>
<dbReference type="InterPro" id="IPR044609">
    <property type="entry name" value="FKBP2/11"/>
</dbReference>
<dbReference type="InterPro" id="IPR046357">
    <property type="entry name" value="PPIase_dom_sf"/>
</dbReference>
<dbReference type="InterPro" id="IPR001179">
    <property type="entry name" value="PPIase_FKBP_dom"/>
</dbReference>
<dbReference type="PANTHER" id="PTHR45779">
    <property type="entry name" value="PEPTIDYLPROLYL ISOMERASE"/>
    <property type="match status" value="1"/>
</dbReference>
<dbReference type="PANTHER" id="PTHR45779:SF7">
    <property type="entry name" value="PEPTIDYLPROLYL ISOMERASE"/>
    <property type="match status" value="1"/>
</dbReference>
<dbReference type="Pfam" id="PF00254">
    <property type="entry name" value="FKBP_C"/>
    <property type="match status" value="1"/>
</dbReference>
<dbReference type="SUPFAM" id="SSF54534">
    <property type="entry name" value="FKBP-like"/>
    <property type="match status" value="1"/>
</dbReference>
<dbReference type="PROSITE" id="PS50059">
    <property type="entry name" value="FKBP_PPIASE"/>
    <property type="match status" value="1"/>
</dbReference>
<protein>
    <recommendedName>
        <fullName>FK506-binding protein 2A</fullName>
        <ecNumber>5.2.1.8</ecNumber>
    </recommendedName>
    <alternativeName>
        <fullName>Peptidyl-prolyl cis-trans isomerase</fullName>
        <shortName>PPIase</shortName>
    </alternativeName>
    <alternativeName>
        <fullName>Rotamase</fullName>
    </alternativeName>
</protein>
<reference key="1">
    <citation type="journal article" date="2009" name="PLoS Genet.">
        <title>Genomic analysis of the basal lineage fungus Rhizopus oryzae reveals a whole-genome duplication.</title>
        <authorList>
            <person name="Ma L.-J."/>
            <person name="Ibrahim A.S."/>
            <person name="Skory C."/>
            <person name="Grabherr M.G."/>
            <person name="Burger G."/>
            <person name="Butler M."/>
            <person name="Elias M."/>
            <person name="Idnurm A."/>
            <person name="Lang B.F."/>
            <person name="Sone T."/>
            <person name="Abe A."/>
            <person name="Calvo S.E."/>
            <person name="Corrochano L.M."/>
            <person name="Engels R."/>
            <person name="Fu J."/>
            <person name="Hansberg W."/>
            <person name="Kim J.-M."/>
            <person name="Kodira C.D."/>
            <person name="Koehrsen M.J."/>
            <person name="Liu B."/>
            <person name="Miranda-Saavedra D."/>
            <person name="O'Leary S."/>
            <person name="Ortiz-Castellanos L."/>
            <person name="Poulter R."/>
            <person name="Rodriguez-Romero J."/>
            <person name="Ruiz-Herrera J."/>
            <person name="Shen Y.-Q."/>
            <person name="Zeng Q."/>
            <person name="Galagan J."/>
            <person name="Birren B.W."/>
            <person name="Cuomo C.A."/>
            <person name="Wickes B.L."/>
        </authorList>
    </citation>
    <scope>NUCLEOTIDE SEQUENCE [LARGE SCALE GENOMIC DNA]</scope>
    <source>
        <strain>RA 99-880 / ATCC MYA-4621 / FGSC 9543 / NRRL 43880</strain>
    </source>
</reference>
<proteinExistence type="inferred from homology"/>
<comment type="function">
    <text evidence="1">PPIases accelerate the folding of proteins. It catalyzes the cis-trans isomerization of proline imidic peptide bonds in oligopeptides (By similarity).</text>
</comment>
<comment type="catalytic activity">
    <reaction>
        <text>[protein]-peptidylproline (omega=180) = [protein]-peptidylproline (omega=0)</text>
        <dbReference type="Rhea" id="RHEA:16237"/>
        <dbReference type="Rhea" id="RHEA-COMP:10747"/>
        <dbReference type="Rhea" id="RHEA-COMP:10748"/>
        <dbReference type="ChEBI" id="CHEBI:83833"/>
        <dbReference type="ChEBI" id="CHEBI:83834"/>
        <dbReference type="EC" id="5.2.1.8"/>
    </reaction>
</comment>
<comment type="activity regulation">
    <text evidence="1">Inhibited by both FK506 and rapamycin.</text>
</comment>
<comment type="subcellular location">
    <subcellularLocation>
        <location evidence="4">Membrane</location>
        <topology evidence="4">Single-pass membrane protein</topology>
    </subcellularLocation>
</comment>
<comment type="similarity">
    <text evidence="4">Belongs to the FKBP-type PPIase family. FKBP2 subfamily.</text>
</comment>
<keyword id="KW-0413">Isomerase</keyword>
<keyword id="KW-0472">Membrane</keyword>
<keyword id="KW-1185">Reference proteome</keyword>
<keyword id="KW-0697">Rotamase</keyword>
<keyword id="KW-0732">Signal</keyword>
<keyword id="KW-0812">Transmembrane</keyword>
<keyword id="KW-1133">Transmembrane helix</keyword>
<sequence>MFSHVICKFLLTLSFITIIYAAKSESTINKPEKCGLKASSSSTVRIHYRSRVWGQEEYFESTYIREAPLEVKLGNGNLLKGIEDGIHGMCTGEIRRLLIPPNQAYGAIGIPNLVPPNTAIVVDVEMVNVNSPFSLWFWISGLILFSAFLLFGRKPIKGDTSNIKKKE</sequence>
<gene>
    <name type="primary">FKBP2</name>
    <name type="synonym">fpr2</name>
    <name type="ORF">RO3G_06709</name>
</gene>